<dbReference type="EMBL" id="M90969">
    <property type="protein sequence ID" value="AAA92851.1"/>
    <property type="molecule type" value="Genomic_DNA"/>
</dbReference>
<dbReference type="PIR" id="A43943">
    <property type="entry name" value="A43943"/>
</dbReference>
<dbReference type="RefSeq" id="WP_015081783.1">
    <property type="nucleotide sequence ID" value="NZ_WJUU01000048.1"/>
</dbReference>
<geneLocation type="plasmid">
    <name>pNP2</name>
</geneLocation>
<sequence length="82" mass="9707">MRGITGSSLQSRTVYTKKPKKKICKNCDSEFWAKAKYTEGYQDYCGFCRMVYRQDKRRIIKKSKVKGPTLYNPKVFSKRKPK</sequence>
<proteinExistence type="predicted"/>
<keyword id="KW-0614">Plasmid</keyword>
<organism>
    <name type="scientific">Lactococcus lactis subsp. lactis</name>
    <name type="common">Streptococcus lactis</name>
    <dbReference type="NCBI Taxonomy" id="1360"/>
    <lineage>
        <taxon>Bacteria</taxon>
        <taxon>Bacillati</taxon>
        <taxon>Bacillota</taxon>
        <taxon>Bacilli</taxon>
        <taxon>Lactobacillales</taxon>
        <taxon>Streptococcaceae</taxon>
        <taxon>Lactococcus</taxon>
    </lineage>
</organism>
<name>YLCN_LACLL</name>
<reference key="1">
    <citation type="journal article" date="1992" name="Appl. Environ. Microbiol.">
        <title>Molecular analyses of the lactococcin A gene cluster from Lactococcus lactis subsp. lactis biovar diacetylactis WM4.</title>
        <authorList>
            <person name="Stoddard G.W."/>
            <person name="Petzel J.P."/>
            <person name="van Belkum M.J."/>
            <person name="Kok J."/>
            <person name="McKay L.L."/>
        </authorList>
    </citation>
    <scope>NUCLEOTIDE SEQUENCE [GENOMIC DNA]</scope>
    <source>
        <strain>Biovar diacetylactis WM4</strain>
    </source>
</reference>
<accession>Q00571</accession>
<feature type="chain" id="PRO_0000066289" description="Uncharacterized 9.7 kDa protein in lcnC 5'region">
    <location>
        <begin position="1"/>
        <end position="82"/>
    </location>
</feature>
<protein>
    <recommendedName>
        <fullName>Uncharacterized 9.7 kDa protein in lcnC 5'region</fullName>
    </recommendedName>
    <alternativeName>
        <fullName>ORFX</fullName>
    </alternativeName>
</protein>